<organism>
    <name type="scientific">Chloroflexus aggregans (strain MD-66 / DSM 9485)</name>
    <dbReference type="NCBI Taxonomy" id="326427"/>
    <lineage>
        <taxon>Bacteria</taxon>
        <taxon>Bacillati</taxon>
        <taxon>Chloroflexota</taxon>
        <taxon>Chloroflexia</taxon>
        <taxon>Chloroflexales</taxon>
        <taxon>Chloroflexineae</taxon>
        <taxon>Chloroflexaceae</taxon>
        <taxon>Chloroflexus</taxon>
    </lineage>
</organism>
<protein>
    <recommendedName>
        <fullName evidence="1">Recombination protein RecR</fullName>
    </recommendedName>
</protein>
<feature type="chain" id="PRO_1000195371" description="Recombination protein RecR">
    <location>
        <begin position="1"/>
        <end position="205"/>
    </location>
</feature>
<feature type="domain" description="Toprim" evidence="1">
    <location>
        <begin position="87"/>
        <end position="182"/>
    </location>
</feature>
<feature type="zinc finger region" description="C4-type" evidence="1">
    <location>
        <begin position="64"/>
        <end position="79"/>
    </location>
</feature>
<accession>B8G7M4</accession>
<dbReference type="EMBL" id="CP001337">
    <property type="protein sequence ID" value="ACL26059.1"/>
    <property type="molecule type" value="Genomic_DNA"/>
</dbReference>
<dbReference type="RefSeq" id="WP_015941906.1">
    <property type="nucleotide sequence ID" value="NC_011831.1"/>
</dbReference>
<dbReference type="SMR" id="B8G7M4"/>
<dbReference type="STRING" id="326427.Cagg_3201"/>
<dbReference type="KEGG" id="cag:Cagg_3201"/>
<dbReference type="eggNOG" id="COG0353">
    <property type="taxonomic scope" value="Bacteria"/>
</dbReference>
<dbReference type="HOGENOM" id="CLU_060739_1_0_0"/>
<dbReference type="OrthoDB" id="9802672at2"/>
<dbReference type="Proteomes" id="UP000002508">
    <property type="component" value="Chromosome"/>
</dbReference>
<dbReference type="GO" id="GO:0003677">
    <property type="term" value="F:DNA binding"/>
    <property type="evidence" value="ECO:0007669"/>
    <property type="project" value="UniProtKB-UniRule"/>
</dbReference>
<dbReference type="GO" id="GO:0008270">
    <property type="term" value="F:zinc ion binding"/>
    <property type="evidence" value="ECO:0007669"/>
    <property type="project" value="UniProtKB-KW"/>
</dbReference>
<dbReference type="GO" id="GO:0006310">
    <property type="term" value="P:DNA recombination"/>
    <property type="evidence" value="ECO:0007669"/>
    <property type="project" value="UniProtKB-UniRule"/>
</dbReference>
<dbReference type="GO" id="GO:0006281">
    <property type="term" value="P:DNA repair"/>
    <property type="evidence" value="ECO:0007669"/>
    <property type="project" value="UniProtKB-UniRule"/>
</dbReference>
<dbReference type="CDD" id="cd01025">
    <property type="entry name" value="TOPRIM_recR"/>
    <property type="match status" value="1"/>
</dbReference>
<dbReference type="Gene3D" id="3.30.60.80">
    <property type="match status" value="1"/>
</dbReference>
<dbReference type="Gene3D" id="3.40.1360.10">
    <property type="match status" value="1"/>
</dbReference>
<dbReference type="Gene3D" id="6.10.250.240">
    <property type="match status" value="1"/>
</dbReference>
<dbReference type="Gene3D" id="1.10.8.420">
    <property type="entry name" value="RecR Domain 1"/>
    <property type="match status" value="1"/>
</dbReference>
<dbReference type="HAMAP" id="MF_00017">
    <property type="entry name" value="RecR"/>
    <property type="match status" value="1"/>
</dbReference>
<dbReference type="InterPro" id="IPR000093">
    <property type="entry name" value="DNA_Rcmb_RecR"/>
</dbReference>
<dbReference type="InterPro" id="IPR023627">
    <property type="entry name" value="Rcmb_RecR"/>
</dbReference>
<dbReference type="InterPro" id="IPR015967">
    <property type="entry name" value="Rcmb_RecR_Znf"/>
</dbReference>
<dbReference type="InterPro" id="IPR006171">
    <property type="entry name" value="TOPRIM_dom"/>
</dbReference>
<dbReference type="InterPro" id="IPR034137">
    <property type="entry name" value="TOPRIM_RecR"/>
</dbReference>
<dbReference type="NCBIfam" id="TIGR00615">
    <property type="entry name" value="recR"/>
    <property type="match status" value="1"/>
</dbReference>
<dbReference type="PANTHER" id="PTHR30446">
    <property type="entry name" value="RECOMBINATION PROTEIN RECR"/>
    <property type="match status" value="1"/>
</dbReference>
<dbReference type="PANTHER" id="PTHR30446:SF0">
    <property type="entry name" value="RECOMBINATION PROTEIN RECR"/>
    <property type="match status" value="1"/>
</dbReference>
<dbReference type="Pfam" id="PF21175">
    <property type="entry name" value="RecR_C"/>
    <property type="match status" value="1"/>
</dbReference>
<dbReference type="Pfam" id="PF21176">
    <property type="entry name" value="RecR_HhH"/>
    <property type="match status" value="1"/>
</dbReference>
<dbReference type="Pfam" id="PF02132">
    <property type="entry name" value="RecR_ZnF"/>
    <property type="match status" value="1"/>
</dbReference>
<dbReference type="Pfam" id="PF13662">
    <property type="entry name" value="Toprim_4"/>
    <property type="match status" value="1"/>
</dbReference>
<dbReference type="SMART" id="SM00493">
    <property type="entry name" value="TOPRIM"/>
    <property type="match status" value="1"/>
</dbReference>
<dbReference type="SUPFAM" id="SSF111304">
    <property type="entry name" value="Recombination protein RecR"/>
    <property type="match status" value="1"/>
</dbReference>
<dbReference type="PROSITE" id="PS01300">
    <property type="entry name" value="RECR"/>
    <property type="match status" value="1"/>
</dbReference>
<dbReference type="PROSITE" id="PS50880">
    <property type="entry name" value="TOPRIM"/>
    <property type="match status" value="1"/>
</dbReference>
<gene>
    <name evidence="1" type="primary">recR</name>
    <name type="ordered locus">Cagg_3201</name>
</gene>
<sequence length="205" mass="22695">MTVHPDHYLIAAPVARLIEEFARLPGIGPKTASRLTFYLLRAEPKQAQALAQAILDVKAQVGYCRRCFNITVDELCPICRDPSRDQTKICVVEEPLDVLAIERTGAYRGLYHVLHGHIAPLEGIYREDLKIDELIARVRSEPVNEVILATNPNTEGEATAFLLLRDLAPLGVRVTRPARGLPTGGDLEWADPETLGSALEGRREL</sequence>
<keyword id="KW-0227">DNA damage</keyword>
<keyword id="KW-0233">DNA recombination</keyword>
<keyword id="KW-0234">DNA repair</keyword>
<keyword id="KW-0479">Metal-binding</keyword>
<keyword id="KW-0862">Zinc</keyword>
<keyword id="KW-0863">Zinc-finger</keyword>
<evidence type="ECO:0000255" key="1">
    <source>
        <dbReference type="HAMAP-Rule" id="MF_00017"/>
    </source>
</evidence>
<comment type="function">
    <text evidence="1">May play a role in DNA repair. It seems to be involved in an RecBC-independent recombinational process of DNA repair. It may act with RecF and RecO.</text>
</comment>
<comment type="similarity">
    <text evidence="1">Belongs to the RecR family.</text>
</comment>
<proteinExistence type="inferred from homology"/>
<name>RECR_CHLAD</name>
<reference key="1">
    <citation type="submission" date="2008-12" db="EMBL/GenBank/DDBJ databases">
        <title>Complete sequence of Chloroflexus aggregans DSM 9485.</title>
        <authorList>
            <consortium name="US DOE Joint Genome Institute"/>
            <person name="Lucas S."/>
            <person name="Copeland A."/>
            <person name="Lapidus A."/>
            <person name="Glavina del Rio T."/>
            <person name="Dalin E."/>
            <person name="Tice H."/>
            <person name="Pitluck S."/>
            <person name="Foster B."/>
            <person name="Larimer F."/>
            <person name="Land M."/>
            <person name="Hauser L."/>
            <person name="Kyrpides N."/>
            <person name="Mikhailova N."/>
            <person name="Bryant D.A."/>
            <person name="Richardson P."/>
        </authorList>
    </citation>
    <scope>NUCLEOTIDE SEQUENCE [LARGE SCALE GENOMIC DNA]</scope>
    <source>
        <strain>MD-66 / DSM 9485</strain>
    </source>
</reference>